<keyword id="KW-0312">Gluconeogenesis</keyword>
<keyword id="KW-0324">Glycolysis</keyword>
<keyword id="KW-0413">Isomerase</keyword>
<keyword id="KW-1185">Reference proteome</keyword>
<organism>
    <name type="scientific">Parvibaculum lavamentivorans (strain DS-1 / DSM 13023 / NCIMB 13966)</name>
    <dbReference type="NCBI Taxonomy" id="402881"/>
    <lineage>
        <taxon>Bacteria</taxon>
        <taxon>Pseudomonadati</taxon>
        <taxon>Pseudomonadota</taxon>
        <taxon>Alphaproteobacteria</taxon>
        <taxon>Hyphomicrobiales</taxon>
        <taxon>Parvibaculaceae</taxon>
        <taxon>Parvibaculum</taxon>
    </lineage>
</organism>
<accession>A7HZ35</accession>
<evidence type="ECO:0000255" key="1">
    <source>
        <dbReference type="HAMAP-Rule" id="MF_01039"/>
    </source>
</evidence>
<proteinExistence type="inferred from homology"/>
<protein>
    <recommendedName>
        <fullName evidence="1">2,3-bisphosphoglycerate-dependent phosphoglycerate mutase</fullName>
        <shortName evidence="1">BPG-dependent PGAM</shortName>
        <shortName evidence="1">PGAM</shortName>
        <shortName evidence="1">Phosphoglyceromutase</shortName>
        <shortName evidence="1">dPGM</shortName>
        <ecNumber evidence="1">5.4.2.11</ecNumber>
    </recommendedName>
</protein>
<feature type="chain" id="PRO_1000149526" description="2,3-bisphosphoglycerate-dependent phosphoglycerate mutase">
    <location>
        <begin position="1"/>
        <end position="210"/>
    </location>
</feature>
<feature type="active site" description="Tele-phosphohistidine intermediate" evidence="1">
    <location>
        <position position="10"/>
    </location>
</feature>
<feature type="active site" description="Proton donor/acceptor" evidence="1">
    <location>
        <position position="88"/>
    </location>
</feature>
<feature type="binding site" evidence="1">
    <location>
        <begin position="9"/>
        <end position="16"/>
    </location>
    <ligand>
        <name>substrate</name>
    </ligand>
</feature>
<feature type="binding site" evidence="1">
    <location>
        <begin position="22"/>
        <end position="23"/>
    </location>
    <ligand>
        <name>substrate</name>
    </ligand>
</feature>
<feature type="binding site" evidence="1">
    <location>
        <position position="61"/>
    </location>
    <ligand>
        <name>substrate</name>
    </ligand>
</feature>
<feature type="binding site" evidence="1">
    <location>
        <begin position="88"/>
        <end position="91"/>
    </location>
    <ligand>
        <name>substrate</name>
    </ligand>
</feature>
<feature type="binding site" evidence="1">
    <location>
        <position position="99"/>
    </location>
    <ligand>
        <name>substrate</name>
    </ligand>
</feature>
<feature type="binding site" evidence="1">
    <location>
        <begin position="115"/>
        <end position="116"/>
    </location>
    <ligand>
        <name>substrate</name>
    </ligand>
</feature>
<feature type="binding site" evidence="1">
    <location>
        <begin position="159"/>
        <end position="160"/>
    </location>
    <ligand>
        <name>substrate</name>
    </ligand>
</feature>
<feature type="site" description="Transition state stabilizer" evidence="1">
    <location>
        <position position="158"/>
    </location>
</feature>
<name>GPMA_PARL1</name>
<sequence length="210" mass="23686">MPNLLVLVRHGQSEWNKKNLFTGWRDPGLTEQGMEEAREAGQAIKAKGLVFDVAYTSALSRAQETNRIVLEELGQGDIEIIENEALNERDYGDLSGLNKDDAREKWGEEQVHIWRRSYDIPPPGGESLKMTAERVLPYFEKEILPRVLKGERVLIAAHGNSLRSLVMQLDKLSQEQVLALNIATGAPIVYELDDKGGVVRKEMLIEREAH</sequence>
<dbReference type="EC" id="5.4.2.11" evidence="1"/>
<dbReference type="EMBL" id="CP000774">
    <property type="protein sequence ID" value="ABS65168.1"/>
    <property type="molecule type" value="Genomic_DNA"/>
</dbReference>
<dbReference type="RefSeq" id="WP_012112428.1">
    <property type="nucleotide sequence ID" value="NC_009719.1"/>
</dbReference>
<dbReference type="SMR" id="A7HZ35"/>
<dbReference type="STRING" id="402881.Plav_3570"/>
<dbReference type="KEGG" id="pla:Plav_3570"/>
<dbReference type="eggNOG" id="COG0588">
    <property type="taxonomic scope" value="Bacteria"/>
</dbReference>
<dbReference type="HOGENOM" id="CLU_033323_1_4_5"/>
<dbReference type="OrthoDB" id="9781415at2"/>
<dbReference type="UniPathway" id="UPA00109">
    <property type="reaction ID" value="UER00186"/>
</dbReference>
<dbReference type="Proteomes" id="UP000006377">
    <property type="component" value="Chromosome"/>
</dbReference>
<dbReference type="GO" id="GO:0004619">
    <property type="term" value="F:phosphoglycerate mutase activity"/>
    <property type="evidence" value="ECO:0007669"/>
    <property type="project" value="UniProtKB-EC"/>
</dbReference>
<dbReference type="GO" id="GO:0006094">
    <property type="term" value="P:gluconeogenesis"/>
    <property type="evidence" value="ECO:0007669"/>
    <property type="project" value="UniProtKB-UniRule"/>
</dbReference>
<dbReference type="GO" id="GO:0006096">
    <property type="term" value="P:glycolytic process"/>
    <property type="evidence" value="ECO:0007669"/>
    <property type="project" value="UniProtKB-UniRule"/>
</dbReference>
<dbReference type="CDD" id="cd07067">
    <property type="entry name" value="HP_PGM_like"/>
    <property type="match status" value="1"/>
</dbReference>
<dbReference type="Gene3D" id="3.40.50.1240">
    <property type="entry name" value="Phosphoglycerate mutase-like"/>
    <property type="match status" value="1"/>
</dbReference>
<dbReference type="HAMAP" id="MF_01039">
    <property type="entry name" value="PGAM_GpmA"/>
    <property type="match status" value="1"/>
</dbReference>
<dbReference type="InterPro" id="IPR013078">
    <property type="entry name" value="His_Pase_superF_clade-1"/>
</dbReference>
<dbReference type="InterPro" id="IPR029033">
    <property type="entry name" value="His_PPase_superfam"/>
</dbReference>
<dbReference type="InterPro" id="IPR001345">
    <property type="entry name" value="PG/BPGM_mutase_AS"/>
</dbReference>
<dbReference type="InterPro" id="IPR005952">
    <property type="entry name" value="Phosphogly_mut1"/>
</dbReference>
<dbReference type="NCBIfam" id="TIGR01258">
    <property type="entry name" value="pgm_1"/>
    <property type="match status" value="2"/>
</dbReference>
<dbReference type="NCBIfam" id="NF002339">
    <property type="entry name" value="PRK01295.1"/>
    <property type="match status" value="1"/>
</dbReference>
<dbReference type="PANTHER" id="PTHR11931">
    <property type="entry name" value="PHOSPHOGLYCERATE MUTASE"/>
    <property type="match status" value="1"/>
</dbReference>
<dbReference type="Pfam" id="PF00300">
    <property type="entry name" value="His_Phos_1"/>
    <property type="match status" value="1"/>
</dbReference>
<dbReference type="PIRSF" id="PIRSF000709">
    <property type="entry name" value="6PFK_2-Ptase"/>
    <property type="match status" value="1"/>
</dbReference>
<dbReference type="SMART" id="SM00855">
    <property type="entry name" value="PGAM"/>
    <property type="match status" value="1"/>
</dbReference>
<dbReference type="SUPFAM" id="SSF53254">
    <property type="entry name" value="Phosphoglycerate mutase-like"/>
    <property type="match status" value="1"/>
</dbReference>
<dbReference type="PROSITE" id="PS00175">
    <property type="entry name" value="PG_MUTASE"/>
    <property type="match status" value="1"/>
</dbReference>
<gene>
    <name evidence="1" type="primary">gpmA</name>
    <name type="ordered locus">Plav_3570</name>
</gene>
<reference key="1">
    <citation type="journal article" date="2011" name="Stand. Genomic Sci.">
        <title>Complete genome sequence of Parvibaculum lavamentivorans type strain (DS-1(T)).</title>
        <authorList>
            <person name="Schleheck D."/>
            <person name="Weiss M."/>
            <person name="Pitluck S."/>
            <person name="Bruce D."/>
            <person name="Land M.L."/>
            <person name="Han S."/>
            <person name="Saunders E."/>
            <person name="Tapia R."/>
            <person name="Detter C."/>
            <person name="Brettin T."/>
            <person name="Han J."/>
            <person name="Woyke T."/>
            <person name="Goodwin L."/>
            <person name="Pennacchio L."/>
            <person name="Nolan M."/>
            <person name="Cook A.M."/>
            <person name="Kjelleberg S."/>
            <person name="Thomas T."/>
        </authorList>
    </citation>
    <scope>NUCLEOTIDE SEQUENCE [LARGE SCALE GENOMIC DNA]</scope>
    <source>
        <strain>DS-1 / DSM 13023 / NCIMB 13966</strain>
    </source>
</reference>
<comment type="function">
    <text evidence="1">Catalyzes the interconversion of 2-phosphoglycerate and 3-phosphoglycerate.</text>
</comment>
<comment type="catalytic activity">
    <reaction evidence="1">
        <text>(2R)-2-phosphoglycerate = (2R)-3-phosphoglycerate</text>
        <dbReference type="Rhea" id="RHEA:15901"/>
        <dbReference type="ChEBI" id="CHEBI:58272"/>
        <dbReference type="ChEBI" id="CHEBI:58289"/>
        <dbReference type="EC" id="5.4.2.11"/>
    </reaction>
</comment>
<comment type="pathway">
    <text evidence="1">Carbohydrate degradation; glycolysis; pyruvate from D-glyceraldehyde 3-phosphate: step 3/5.</text>
</comment>
<comment type="subunit">
    <text evidence="1">Homodimer.</text>
</comment>
<comment type="similarity">
    <text evidence="1">Belongs to the phosphoglycerate mutase family. BPG-dependent PGAM subfamily.</text>
</comment>